<name>RS6_RHOP5</name>
<protein>
    <recommendedName>
        <fullName evidence="1">Small ribosomal subunit protein bS6</fullName>
    </recommendedName>
    <alternativeName>
        <fullName evidence="3">30S ribosomal protein S6</fullName>
    </alternativeName>
</protein>
<organism>
    <name type="scientific">Rhodopseudomonas palustris (strain BisA53)</name>
    <dbReference type="NCBI Taxonomy" id="316055"/>
    <lineage>
        <taxon>Bacteria</taxon>
        <taxon>Pseudomonadati</taxon>
        <taxon>Pseudomonadota</taxon>
        <taxon>Alphaproteobacteria</taxon>
        <taxon>Hyphomicrobiales</taxon>
        <taxon>Nitrobacteraceae</taxon>
        <taxon>Rhodopseudomonas</taxon>
    </lineage>
</organism>
<reference key="1">
    <citation type="submission" date="2006-09" db="EMBL/GenBank/DDBJ databases">
        <title>Complete sequence of Rhodopseudomonas palustris BisA53.</title>
        <authorList>
            <consortium name="US DOE Joint Genome Institute"/>
            <person name="Copeland A."/>
            <person name="Lucas S."/>
            <person name="Lapidus A."/>
            <person name="Barry K."/>
            <person name="Detter J.C."/>
            <person name="Glavina del Rio T."/>
            <person name="Hammon N."/>
            <person name="Israni S."/>
            <person name="Dalin E."/>
            <person name="Tice H."/>
            <person name="Pitluck S."/>
            <person name="Chain P."/>
            <person name="Malfatti S."/>
            <person name="Shin M."/>
            <person name="Vergez L."/>
            <person name="Schmutz J."/>
            <person name="Larimer F."/>
            <person name="Land M."/>
            <person name="Hauser L."/>
            <person name="Pelletier D.A."/>
            <person name="Kyrpides N."/>
            <person name="Kim E."/>
            <person name="Harwood C.S."/>
            <person name="Oda Y."/>
            <person name="Richardson P."/>
        </authorList>
    </citation>
    <scope>NUCLEOTIDE SEQUENCE [LARGE SCALE GENOMIC DNA]</scope>
    <source>
        <strain>BisA53</strain>
    </source>
</reference>
<comment type="function">
    <text evidence="1">Binds together with bS18 to 16S ribosomal RNA.</text>
</comment>
<comment type="similarity">
    <text evidence="1">Belongs to the bacterial ribosomal protein bS6 family.</text>
</comment>
<keyword id="KW-0687">Ribonucleoprotein</keyword>
<keyword id="KW-0689">Ribosomal protein</keyword>
<keyword id="KW-0694">RNA-binding</keyword>
<keyword id="KW-0699">rRNA-binding</keyword>
<gene>
    <name evidence="1" type="primary">rpsF</name>
    <name type="ordered locus">RPE_3309</name>
</gene>
<evidence type="ECO:0000255" key="1">
    <source>
        <dbReference type="HAMAP-Rule" id="MF_00360"/>
    </source>
</evidence>
<evidence type="ECO:0000256" key="2">
    <source>
        <dbReference type="SAM" id="MobiDB-lite"/>
    </source>
</evidence>
<evidence type="ECO:0000305" key="3"/>
<sequence>MPLYEHVFLARQDASTQQVEELTTQITGVIEGLGGKVVKMEAWGVRSLTYRMNKNRKAHFVLLNIDGPSAVVAEVERQERINEDVIRYLTVRVDEHEEGPSAMMRKADRDRDRDERGGGGFRGDREGGFRGDREGGGFRGDRGPRRPRDDAPAATEE</sequence>
<dbReference type="EMBL" id="CP000463">
    <property type="protein sequence ID" value="ABJ07242.1"/>
    <property type="molecule type" value="Genomic_DNA"/>
</dbReference>
<dbReference type="SMR" id="Q07LE2"/>
<dbReference type="STRING" id="316055.RPE_3309"/>
<dbReference type="KEGG" id="rpe:RPE_3309"/>
<dbReference type="eggNOG" id="COG0360">
    <property type="taxonomic scope" value="Bacteria"/>
</dbReference>
<dbReference type="HOGENOM" id="CLU_113441_2_0_5"/>
<dbReference type="OrthoDB" id="9812702at2"/>
<dbReference type="GO" id="GO:0022627">
    <property type="term" value="C:cytosolic small ribosomal subunit"/>
    <property type="evidence" value="ECO:0007669"/>
    <property type="project" value="TreeGrafter"/>
</dbReference>
<dbReference type="GO" id="GO:0070181">
    <property type="term" value="F:small ribosomal subunit rRNA binding"/>
    <property type="evidence" value="ECO:0007669"/>
    <property type="project" value="TreeGrafter"/>
</dbReference>
<dbReference type="GO" id="GO:0003735">
    <property type="term" value="F:structural constituent of ribosome"/>
    <property type="evidence" value="ECO:0007669"/>
    <property type="project" value="InterPro"/>
</dbReference>
<dbReference type="GO" id="GO:0006412">
    <property type="term" value="P:translation"/>
    <property type="evidence" value="ECO:0007669"/>
    <property type="project" value="UniProtKB-UniRule"/>
</dbReference>
<dbReference type="CDD" id="cd00473">
    <property type="entry name" value="bS6"/>
    <property type="match status" value="1"/>
</dbReference>
<dbReference type="Gene3D" id="3.30.70.60">
    <property type="match status" value="1"/>
</dbReference>
<dbReference type="HAMAP" id="MF_00360">
    <property type="entry name" value="Ribosomal_bS6"/>
    <property type="match status" value="1"/>
</dbReference>
<dbReference type="InterPro" id="IPR000529">
    <property type="entry name" value="Ribosomal_bS6"/>
</dbReference>
<dbReference type="InterPro" id="IPR035980">
    <property type="entry name" value="Ribosomal_bS6_sf"/>
</dbReference>
<dbReference type="InterPro" id="IPR020814">
    <property type="entry name" value="Ribosomal_S6_plastid/chlpt"/>
</dbReference>
<dbReference type="InterPro" id="IPR014717">
    <property type="entry name" value="Transl_elong_EF1B/ribsomal_bS6"/>
</dbReference>
<dbReference type="NCBIfam" id="TIGR00166">
    <property type="entry name" value="S6"/>
    <property type="match status" value="1"/>
</dbReference>
<dbReference type="PANTHER" id="PTHR21011">
    <property type="entry name" value="MITOCHONDRIAL 28S RIBOSOMAL PROTEIN S6"/>
    <property type="match status" value="1"/>
</dbReference>
<dbReference type="PANTHER" id="PTHR21011:SF1">
    <property type="entry name" value="SMALL RIBOSOMAL SUBUNIT PROTEIN BS6M"/>
    <property type="match status" value="1"/>
</dbReference>
<dbReference type="Pfam" id="PF01250">
    <property type="entry name" value="Ribosomal_S6"/>
    <property type="match status" value="1"/>
</dbReference>
<dbReference type="SUPFAM" id="SSF54995">
    <property type="entry name" value="Ribosomal protein S6"/>
    <property type="match status" value="1"/>
</dbReference>
<accession>Q07LE2</accession>
<proteinExistence type="inferred from homology"/>
<feature type="chain" id="PRO_1000005330" description="Small ribosomal subunit protein bS6">
    <location>
        <begin position="1"/>
        <end position="157"/>
    </location>
</feature>
<feature type="region of interest" description="Disordered" evidence="2">
    <location>
        <begin position="96"/>
        <end position="157"/>
    </location>
</feature>
<feature type="compositionally biased region" description="Basic and acidic residues" evidence="2">
    <location>
        <begin position="96"/>
        <end position="151"/>
    </location>
</feature>